<comment type="function">
    <text evidence="1">Proton-conducting pore forming subunit of the V0 complex of vacuolar(H+)-ATPase (V-ATPase), a multisubunit enzyme composed of a peripheral complex (V1) that hydrolyzes ATP and a membrane integral complex (V0) that translocates protons (By similarity). V-ATPase is responsible for acidifying and maintaining the pH of intracellular compartments (By similarity).</text>
</comment>
<comment type="subunit">
    <text evidence="1">V-ATPase is a heteromultimeric enzyme composed of a peripheral catalytic V1 complex (components A to H) attached to an integral membrane V0 proton pore complex (components: a, c, c', c'', d, e, f and VOA1) (By similarity). The decameric c-ring forms the proton-conducting pore, and is composed of eight proteolipid subunits c, one subunit c' and one subunit c'' (By similarity).</text>
</comment>
<comment type="subcellular location">
    <subcellularLocation>
        <location evidence="1">Vacuole membrane</location>
        <topology evidence="2">Multi-pass membrane protein</topology>
    </subcellularLocation>
</comment>
<comment type="similarity">
    <text evidence="3">Belongs to the V-ATPase proteolipid subunit family.</text>
</comment>
<organism>
    <name type="scientific">Neurospora crassa (strain ATCC 24698 / 74-OR23-1A / CBS 708.71 / DSM 1257 / FGSC 987)</name>
    <dbReference type="NCBI Taxonomy" id="367110"/>
    <lineage>
        <taxon>Eukaryota</taxon>
        <taxon>Fungi</taxon>
        <taxon>Dikarya</taxon>
        <taxon>Ascomycota</taxon>
        <taxon>Pezizomycotina</taxon>
        <taxon>Sordariomycetes</taxon>
        <taxon>Sordariomycetidae</taxon>
        <taxon>Sordariales</taxon>
        <taxon>Sordariaceae</taxon>
        <taxon>Neurospora</taxon>
    </lineage>
</organism>
<name>VATL2_NEUCR</name>
<keyword id="KW-0375">Hydrogen ion transport</keyword>
<keyword id="KW-0406">Ion transport</keyword>
<keyword id="KW-0472">Membrane</keyword>
<keyword id="KW-1185">Reference proteome</keyword>
<keyword id="KW-0812">Transmembrane</keyword>
<keyword id="KW-1133">Transmembrane helix</keyword>
<keyword id="KW-0813">Transport</keyword>
<keyword id="KW-0926">Vacuole</keyword>
<proteinExistence type="evidence at transcript level"/>
<sequence>MAEIMADSELAPKFAPFIGMAGIAAAMIFGSAGAAYGTAKSGIGIAGVGTFRPDLIMKCLIPVVMSGIIAVYALVVAVLIAQDLGPPGSGQHYSLFNGFMHLACGLSVGLTGLAAGYCIGIVGDKGVRSFMLQSRIFVGMVLILIFGEVLGLYGLIVALILNTKSKG</sequence>
<dbReference type="EMBL" id="AF162776">
    <property type="protein sequence ID" value="AAD45120.2"/>
    <property type="molecule type" value="mRNA"/>
</dbReference>
<dbReference type="EMBL" id="AF330696">
    <property type="protein sequence ID" value="AAK13465.1"/>
    <property type="molecule type" value="Genomic_DNA"/>
</dbReference>
<dbReference type="EMBL" id="CM002236">
    <property type="protein sequence ID" value="EAA36571.1"/>
    <property type="molecule type" value="Genomic_DNA"/>
</dbReference>
<dbReference type="RefSeq" id="XP_965807.1">
    <property type="nucleotide sequence ID" value="XM_960714.3"/>
</dbReference>
<dbReference type="SMR" id="Q9Y874"/>
<dbReference type="FunCoup" id="Q9Y874">
    <property type="interactions" value="150"/>
</dbReference>
<dbReference type="STRING" id="367110.Q9Y874"/>
<dbReference type="PaxDb" id="5141-EFNCRP00000000803"/>
<dbReference type="EnsemblFungi" id="EAA36571">
    <property type="protein sequence ID" value="EAA36571"/>
    <property type="gene ID" value="NCU00667"/>
</dbReference>
<dbReference type="GeneID" id="3881932"/>
<dbReference type="KEGG" id="ncr:NCU00667"/>
<dbReference type="VEuPathDB" id="FungiDB:NCU00667"/>
<dbReference type="HOGENOM" id="CLU_085752_1_1_1"/>
<dbReference type="InParanoid" id="Q9Y874"/>
<dbReference type="OrthoDB" id="1744869at2759"/>
<dbReference type="Proteomes" id="UP000001805">
    <property type="component" value="Chromosome 1, Linkage Group I"/>
</dbReference>
<dbReference type="GO" id="GO:0000324">
    <property type="term" value="C:fungal-type vacuole"/>
    <property type="evidence" value="ECO:0007669"/>
    <property type="project" value="EnsemblFungi"/>
</dbReference>
<dbReference type="GO" id="GO:0016020">
    <property type="term" value="C:membrane"/>
    <property type="evidence" value="ECO:0000318"/>
    <property type="project" value="GO_Central"/>
</dbReference>
<dbReference type="GO" id="GO:0000220">
    <property type="term" value="C:vacuolar proton-transporting V-type ATPase, V0 domain"/>
    <property type="evidence" value="ECO:0007669"/>
    <property type="project" value="EnsemblFungi"/>
</dbReference>
<dbReference type="GO" id="GO:0046961">
    <property type="term" value="F:proton-transporting ATPase activity, rotational mechanism"/>
    <property type="evidence" value="ECO:0007669"/>
    <property type="project" value="InterPro"/>
</dbReference>
<dbReference type="CDD" id="cd18175">
    <property type="entry name" value="ATP-synt_Vo_c_ATP6C_rpt1"/>
    <property type="match status" value="1"/>
</dbReference>
<dbReference type="CDD" id="cd18176">
    <property type="entry name" value="ATP-synt_Vo_c_ATP6C_rpt2"/>
    <property type="match status" value="1"/>
</dbReference>
<dbReference type="FunFam" id="1.20.120.610:FF:000003">
    <property type="entry name" value="V-type proton ATPase proteolipid subunit"/>
    <property type="match status" value="1"/>
</dbReference>
<dbReference type="Gene3D" id="1.20.120.610">
    <property type="entry name" value="lithium bound rotor ring of v- atpase"/>
    <property type="match status" value="1"/>
</dbReference>
<dbReference type="InterPro" id="IPR002379">
    <property type="entry name" value="ATPase_proteolipid_c-like_dom"/>
</dbReference>
<dbReference type="InterPro" id="IPR000245">
    <property type="entry name" value="ATPase_proteolipid_csu"/>
</dbReference>
<dbReference type="InterPro" id="IPR011555">
    <property type="entry name" value="ATPase_proteolipid_su_C_euk"/>
</dbReference>
<dbReference type="InterPro" id="IPR035921">
    <property type="entry name" value="F/V-ATP_Csub_sf"/>
</dbReference>
<dbReference type="NCBIfam" id="TIGR01100">
    <property type="entry name" value="V_ATP_synt_C"/>
    <property type="match status" value="1"/>
</dbReference>
<dbReference type="PANTHER" id="PTHR10263">
    <property type="entry name" value="V-TYPE PROTON ATPASE PROTEOLIPID SUBUNIT"/>
    <property type="match status" value="1"/>
</dbReference>
<dbReference type="Pfam" id="PF00137">
    <property type="entry name" value="ATP-synt_C"/>
    <property type="match status" value="2"/>
</dbReference>
<dbReference type="PRINTS" id="PR00122">
    <property type="entry name" value="VACATPASE"/>
</dbReference>
<dbReference type="SUPFAM" id="SSF81333">
    <property type="entry name" value="F1F0 ATP synthase subunit C"/>
    <property type="match status" value="1"/>
</dbReference>
<accession>Q9Y874</accession>
<accession>Q1K956</accession>
<feature type="chain" id="PRO_0000071786" description="V-type proton ATPase subunit c'">
    <location>
        <begin position="1"/>
        <end position="167"/>
    </location>
</feature>
<feature type="topological domain" description="Lumenal" evidence="2">
    <location>
        <begin position="1"/>
        <end position="13"/>
    </location>
</feature>
<feature type="transmembrane region" description="Helical" evidence="2">
    <location>
        <begin position="14"/>
        <end position="34"/>
    </location>
</feature>
<feature type="topological domain" description="Cytoplasmic" evidence="2">
    <location>
        <begin position="35"/>
        <end position="59"/>
    </location>
</feature>
<feature type="transmembrane region" description="Helical" evidence="2">
    <location>
        <begin position="60"/>
        <end position="80"/>
    </location>
</feature>
<feature type="topological domain" description="Lumenal" evidence="2">
    <location>
        <begin position="81"/>
        <end position="101"/>
    </location>
</feature>
<feature type="transmembrane region" description="Helical" evidence="2">
    <location>
        <begin position="102"/>
        <end position="122"/>
    </location>
</feature>
<feature type="topological domain" description="Cytoplasmic" evidence="2">
    <location>
        <begin position="123"/>
        <end position="140"/>
    </location>
</feature>
<feature type="transmembrane region" description="Helical" evidence="2">
    <location>
        <begin position="141"/>
        <end position="161"/>
    </location>
</feature>
<feature type="topological domain" description="Lumenal" evidence="2">
    <location>
        <begin position="162"/>
        <end position="167"/>
    </location>
</feature>
<feature type="site" description="Essential for proton translocation" evidence="1">
    <location>
        <position position="148"/>
    </location>
</feature>
<reference key="1">
    <citation type="submission" date="2000-12" db="EMBL/GenBank/DDBJ databases">
        <title>Proteolipid subunits of the vacuolar ATPase in Neurospora crassa.</title>
        <authorList>
            <person name="Pounder J.I."/>
            <person name="Bowman B.J."/>
        </authorList>
    </citation>
    <scope>NUCLEOTIDE SEQUENCE [MRNA]</scope>
</reference>
<reference key="2">
    <citation type="submission" date="2000-12" db="EMBL/GenBank/DDBJ databases">
        <title>Genomic sequence of the c' subunit of the vacuolar ATPase.</title>
        <authorList>
            <person name="Tenney K.L."/>
            <person name="Bowman B.J."/>
        </authorList>
    </citation>
    <scope>NUCLEOTIDE SEQUENCE [GENOMIC DNA]</scope>
</reference>
<reference key="3">
    <citation type="journal article" date="2003" name="Nature">
        <title>The genome sequence of the filamentous fungus Neurospora crassa.</title>
        <authorList>
            <person name="Galagan J.E."/>
            <person name="Calvo S.E."/>
            <person name="Borkovich K.A."/>
            <person name="Selker E.U."/>
            <person name="Read N.D."/>
            <person name="Jaffe D.B."/>
            <person name="FitzHugh W."/>
            <person name="Ma L.-J."/>
            <person name="Smirnov S."/>
            <person name="Purcell S."/>
            <person name="Rehman B."/>
            <person name="Elkins T."/>
            <person name="Engels R."/>
            <person name="Wang S."/>
            <person name="Nielsen C.B."/>
            <person name="Butler J."/>
            <person name="Endrizzi M."/>
            <person name="Qui D."/>
            <person name="Ianakiev P."/>
            <person name="Bell-Pedersen D."/>
            <person name="Nelson M.A."/>
            <person name="Werner-Washburne M."/>
            <person name="Selitrennikoff C.P."/>
            <person name="Kinsey J.A."/>
            <person name="Braun E.L."/>
            <person name="Zelter A."/>
            <person name="Schulte U."/>
            <person name="Kothe G.O."/>
            <person name="Jedd G."/>
            <person name="Mewes H.-W."/>
            <person name="Staben C."/>
            <person name="Marcotte E."/>
            <person name="Greenberg D."/>
            <person name="Roy A."/>
            <person name="Foley K."/>
            <person name="Naylor J."/>
            <person name="Stange-Thomann N."/>
            <person name="Barrett R."/>
            <person name="Gnerre S."/>
            <person name="Kamal M."/>
            <person name="Kamvysselis M."/>
            <person name="Mauceli E.W."/>
            <person name="Bielke C."/>
            <person name="Rudd S."/>
            <person name="Frishman D."/>
            <person name="Krystofova S."/>
            <person name="Rasmussen C."/>
            <person name="Metzenberg R.L."/>
            <person name="Perkins D.D."/>
            <person name="Kroken S."/>
            <person name="Cogoni C."/>
            <person name="Macino G."/>
            <person name="Catcheside D.E.A."/>
            <person name="Li W."/>
            <person name="Pratt R.J."/>
            <person name="Osmani S.A."/>
            <person name="DeSouza C.P.C."/>
            <person name="Glass N.L."/>
            <person name="Orbach M.J."/>
            <person name="Berglund J.A."/>
            <person name="Voelker R."/>
            <person name="Yarden O."/>
            <person name="Plamann M."/>
            <person name="Seiler S."/>
            <person name="Dunlap J.C."/>
            <person name="Radford A."/>
            <person name="Aramayo R."/>
            <person name="Natvig D.O."/>
            <person name="Alex L.A."/>
            <person name="Mannhaupt G."/>
            <person name="Ebbole D.J."/>
            <person name="Freitag M."/>
            <person name="Paulsen I."/>
            <person name="Sachs M.S."/>
            <person name="Lander E.S."/>
            <person name="Nusbaum C."/>
            <person name="Birren B.W."/>
        </authorList>
    </citation>
    <scope>NUCLEOTIDE SEQUENCE [LARGE SCALE GENOMIC DNA]</scope>
    <source>
        <strain>ATCC 24698 / 74-OR23-1A / CBS 708.71 / DSM 1257 / FGSC 987</strain>
    </source>
</reference>
<protein>
    <recommendedName>
        <fullName evidence="1">V-type proton ATPase subunit c'</fullName>
        <shortName evidence="1">V-ATPase subunit c'</shortName>
    </recommendedName>
    <alternativeName>
        <fullName>Proteolipid protein vma-11</fullName>
    </alternativeName>
    <alternativeName>
        <fullName>V-type proton ATPase 16 kDa proteolipid subunit 2</fullName>
        <shortName>V-ATPase 16 kDa proteolipid subunit 2</shortName>
    </alternativeName>
    <alternativeName>
        <fullName>Vacuolar proton pump 16 kDa proteolipid subunit 2</fullName>
    </alternativeName>
    <alternativeName>
        <fullName evidence="1">Vacuolar proton pump c' subunit</fullName>
    </alternativeName>
</protein>
<evidence type="ECO:0000250" key="1">
    <source>
        <dbReference type="UniProtKB" id="P32842"/>
    </source>
</evidence>
<evidence type="ECO:0000255" key="2"/>
<evidence type="ECO:0000305" key="3"/>
<gene>
    <name type="primary">vma-11</name>
    <name type="ORF">NCU00667</name>
</gene>